<protein>
    <recommendedName>
        <fullName>Orotidine 5'-phosphate decarboxylase</fullName>
        <ecNumber>4.1.1.23</ecNumber>
    </recommendedName>
    <alternativeName>
        <fullName>OMP decarboxylase</fullName>
        <shortName>OMPDCase</shortName>
        <shortName>OMPdecase</shortName>
    </alternativeName>
    <alternativeName>
        <fullName>Uridine 5'-monophosphate synthase</fullName>
        <shortName>UMP synthase</shortName>
    </alternativeName>
</protein>
<gene>
    <name type="primary">pyrG</name>
    <name type="ORF">AO090011000868</name>
</gene>
<proteinExistence type="inferred from homology"/>
<organism>
    <name type="scientific">Aspergillus oryzae (strain ATCC 42149 / RIB 40)</name>
    <name type="common">Yellow koji mold</name>
    <dbReference type="NCBI Taxonomy" id="510516"/>
    <lineage>
        <taxon>Eukaryota</taxon>
        <taxon>Fungi</taxon>
        <taxon>Dikarya</taxon>
        <taxon>Ascomycota</taxon>
        <taxon>Pezizomycotina</taxon>
        <taxon>Eurotiomycetes</taxon>
        <taxon>Eurotiomycetidae</taxon>
        <taxon>Eurotiales</taxon>
        <taxon>Aspergillaceae</taxon>
        <taxon>Aspergillus</taxon>
        <taxon>Aspergillus subgen. Circumdati</taxon>
    </lineage>
</organism>
<reference key="1">
    <citation type="submission" date="1997-06" db="EMBL/GenBank/DDBJ databases">
        <authorList>
            <person name="Doumas A."/>
            <person name="Vandenbroek P.J.M."/>
            <person name="Affolter M."/>
            <person name="Monod M."/>
        </authorList>
    </citation>
    <scope>NUCLEOTIDE SEQUENCE [GENOMIC DNA]</scope>
    <source>
        <strain>TK3</strain>
    </source>
</reference>
<reference key="2">
    <citation type="journal article" date="1999" name="Nihon Shoyu Kenkyujo Zasshi">
        <title>Nucleotide sequence of the pyrG gene from a shoyu koji mold, Aspergillus oryzae KBN616.</title>
        <authorList>
            <person name="Kitamoto N."/>
            <person name="Yoshino S."/>
        </authorList>
    </citation>
    <scope>NUCLEOTIDE SEQUENCE [GENOMIC DNA]</scope>
    <source>
        <strain>KBN616</strain>
    </source>
</reference>
<reference key="3">
    <citation type="journal article" date="2005" name="Nature">
        <title>Genome sequencing and analysis of Aspergillus oryzae.</title>
        <authorList>
            <person name="Machida M."/>
            <person name="Asai K."/>
            <person name="Sano M."/>
            <person name="Tanaka T."/>
            <person name="Kumagai T."/>
            <person name="Terai G."/>
            <person name="Kusumoto K."/>
            <person name="Arima T."/>
            <person name="Akita O."/>
            <person name="Kashiwagi Y."/>
            <person name="Abe K."/>
            <person name="Gomi K."/>
            <person name="Horiuchi H."/>
            <person name="Kitamoto K."/>
            <person name="Kobayashi T."/>
            <person name="Takeuchi M."/>
            <person name="Denning D.W."/>
            <person name="Galagan J.E."/>
            <person name="Nierman W.C."/>
            <person name="Yu J."/>
            <person name="Archer D.B."/>
            <person name="Bennett J.W."/>
            <person name="Bhatnagar D."/>
            <person name="Cleveland T.E."/>
            <person name="Fedorova N.D."/>
            <person name="Gotoh O."/>
            <person name="Horikawa H."/>
            <person name="Hosoyama A."/>
            <person name="Ichinomiya M."/>
            <person name="Igarashi R."/>
            <person name="Iwashita K."/>
            <person name="Juvvadi P.R."/>
            <person name="Kato M."/>
            <person name="Kato Y."/>
            <person name="Kin T."/>
            <person name="Kokubun A."/>
            <person name="Maeda H."/>
            <person name="Maeyama N."/>
            <person name="Maruyama J."/>
            <person name="Nagasaki H."/>
            <person name="Nakajima T."/>
            <person name="Oda K."/>
            <person name="Okada K."/>
            <person name="Paulsen I."/>
            <person name="Sakamoto K."/>
            <person name="Sawano T."/>
            <person name="Takahashi M."/>
            <person name="Takase K."/>
            <person name="Terabayashi Y."/>
            <person name="Wortman J.R."/>
            <person name="Yamada O."/>
            <person name="Yamagata Y."/>
            <person name="Anazawa H."/>
            <person name="Hata Y."/>
            <person name="Koide Y."/>
            <person name="Komori T."/>
            <person name="Koyama Y."/>
            <person name="Minetoki T."/>
            <person name="Suharnan S."/>
            <person name="Tanaka A."/>
            <person name="Isono K."/>
            <person name="Kuhara S."/>
            <person name="Ogasawara N."/>
            <person name="Kikuchi H."/>
        </authorList>
    </citation>
    <scope>NUCLEOTIDE SEQUENCE [LARGE SCALE GENOMIC DNA]</scope>
    <source>
        <strain>ATCC 42149 / RIB 40</strain>
    </source>
</reference>
<keyword id="KW-0210">Decarboxylase</keyword>
<keyword id="KW-0456">Lyase</keyword>
<keyword id="KW-0665">Pyrimidine biosynthesis</keyword>
<keyword id="KW-1185">Reference proteome</keyword>
<comment type="catalytic activity">
    <reaction evidence="2">
        <text>orotidine 5'-phosphate + H(+) = UMP + CO2</text>
        <dbReference type="Rhea" id="RHEA:11596"/>
        <dbReference type="ChEBI" id="CHEBI:15378"/>
        <dbReference type="ChEBI" id="CHEBI:16526"/>
        <dbReference type="ChEBI" id="CHEBI:57538"/>
        <dbReference type="ChEBI" id="CHEBI:57865"/>
        <dbReference type="EC" id="4.1.1.23"/>
    </reaction>
</comment>
<comment type="pathway">
    <text>Pyrimidine metabolism; UMP biosynthesis via de novo pathway; UMP from orotate: step 2/2.</text>
</comment>
<comment type="similarity">
    <text evidence="3">Belongs to the OMP decarboxylase family.</text>
</comment>
<accession>O13416</accession>
<accession>O74652</accession>
<accession>Q2TZF8</accession>
<name>PYRF_ASPOR</name>
<evidence type="ECO:0000250" key="1"/>
<evidence type="ECO:0000255" key="2">
    <source>
        <dbReference type="PROSITE-ProRule" id="PRU10110"/>
    </source>
</evidence>
<evidence type="ECO:0000305" key="3"/>
<feature type="chain" id="PRO_0000134644" description="Orotidine 5'-phosphate decarboxylase">
    <location>
        <begin position="1"/>
        <end position="277"/>
    </location>
</feature>
<feature type="active site" description="Proton donor" evidence="2">
    <location>
        <position position="95"/>
    </location>
</feature>
<feature type="binding site" evidence="1">
    <location>
        <position position="40"/>
    </location>
    <ligand>
        <name>substrate</name>
    </ligand>
</feature>
<feature type="binding site" evidence="1">
    <location>
        <begin position="62"/>
        <end position="64"/>
    </location>
    <ligand>
        <name>substrate</name>
    </ligand>
</feature>
<feature type="binding site" evidence="1">
    <location>
        <begin position="93"/>
        <end position="102"/>
    </location>
    <ligand>
        <name>substrate</name>
    </ligand>
</feature>
<feature type="binding site" evidence="1">
    <location>
        <position position="229"/>
    </location>
    <ligand>
        <name>substrate</name>
    </ligand>
</feature>
<feature type="binding site" evidence="1">
    <location>
        <position position="247"/>
    </location>
    <ligand>
        <name>substrate</name>
    </ligand>
</feature>
<feature type="sequence variant" description="In strain: KBN616.">
    <original>K</original>
    <variation>N</variation>
    <location>
        <position position="260"/>
    </location>
</feature>
<dbReference type="EC" id="4.1.1.23"/>
<dbReference type="EMBL" id="Y13811">
    <property type="protein sequence ID" value="CAA74139.1"/>
    <property type="molecule type" value="Genomic_DNA"/>
</dbReference>
<dbReference type="EMBL" id="AB017705">
    <property type="protein sequence ID" value="BAA33760.1"/>
    <property type="molecule type" value="Genomic_DNA"/>
</dbReference>
<dbReference type="EMBL" id="BA000055">
    <property type="protein sequence ID" value="BAE65307.1"/>
    <property type="molecule type" value="Genomic_DNA"/>
</dbReference>
<dbReference type="RefSeq" id="XP_001826440.1">
    <property type="nucleotide sequence ID" value="XM_001826388.2"/>
</dbReference>
<dbReference type="SMR" id="O13416"/>
<dbReference type="STRING" id="510516.O13416"/>
<dbReference type="EnsemblFungi" id="BAE65307">
    <property type="protein sequence ID" value="BAE65307"/>
    <property type="gene ID" value="AO090011000868"/>
</dbReference>
<dbReference type="GeneID" id="5998543"/>
<dbReference type="KEGG" id="aor:AO090011000868"/>
<dbReference type="VEuPathDB" id="FungiDB:AO090011000868"/>
<dbReference type="HOGENOM" id="CLU_030821_0_0_1"/>
<dbReference type="OMA" id="CLIKTHI"/>
<dbReference type="OrthoDB" id="24206at5052"/>
<dbReference type="UniPathway" id="UPA00070">
    <property type="reaction ID" value="UER00120"/>
</dbReference>
<dbReference type="Proteomes" id="UP000006564">
    <property type="component" value="Chromosome 7"/>
</dbReference>
<dbReference type="GO" id="GO:0005829">
    <property type="term" value="C:cytosol"/>
    <property type="evidence" value="ECO:0007669"/>
    <property type="project" value="EnsemblFungi"/>
</dbReference>
<dbReference type="GO" id="GO:0004588">
    <property type="term" value="F:orotate phosphoribosyltransferase activity"/>
    <property type="evidence" value="ECO:0007669"/>
    <property type="project" value="TreeGrafter"/>
</dbReference>
<dbReference type="GO" id="GO:0004590">
    <property type="term" value="F:orotidine-5'-phosphate decarboxylase activity"/>
    <property type="evidence" value="ECO:0007669"/>
    <property type="project" value="UniProtKB-EC"/>
</dbReference>
<dbReference type="GO" id="GO:0006207">
    <property type="term" value="P:'de novo' pyrimidine nucleobase biosynthetic process"/>
    <property type="evidence" value="ECO:0007669"/>
    <property type="project" value="EnsemblFungi"/>
</dbReference>
<dbReference type="GO" id="GO:0044205">
    <property type="term" value="P:'de novo' UMP biosynthetic process"/>
    <property type="evidence" value="ECO:0007669"/>
    <property type="project" value="UniProtKB-UniPathway"/>
</dbReference>
<dbReference type="CDD" id="cd04725">
    <property type="entry name" value="OMP_decarboxylase_like"/>
    <property type="match status" value="1"/>
</dbReference>
<dbReference type="FunFam" id="3.20.20.70:FF:000114">
    <property type="entry name" value="Decarboxylase,orotidine phosphate"/>
    <property type="match status" value="1"/>
</dbReference>
<dbReference type="Gene3D" id="3.20.20.70">
    <property type="entry name" value="Aldolase class I"/>
    <property type="match status" value="1"/>
</dbReference>
<dbReference type="InterPro" id="IPR013785">
    <property type="entry name" value="Aldolase_TIM"/>
</dbReference>
<dbReference type="InterPro" id="IPR014732">
    <property type="entry name" value="OMPdecase"/>
</dbReference>
<dbReference type="InterPro" id="IPR018089">
    <property type="entry name" value="OMPdecase_AS"/>
</dbReference>
<dbReference type="InterPro" id="IPR001754">
    <property type="entry name" value="OMPdeCOase_dom"/>
</dbReference>
<dbReference type="InterPro" id="IPR011060">
    <property type="entry name" value="RibuloseP-bd_barrel"/>
</dbReference>
<dbReference type="NCBIfam" id="TIGR01740">
    <property type="entry name" value="pyrF"/>
    <property type="match status" value="1"/>
</dbReference>
<dbReference type="PANTHER" id="PTHR19278">
    <property type="entry name" value="OROTATE PHOSPHORIBOSYLTRANSFERASE"/>
    <property type="match status" value="1"/>
</dbReference>
<dbReference type="PANTHER" id="PTHR19278:SF9">
    <property type="entry name" value="URIDINE 5'-MONOPHOSPHATE SYNTHASE"/>
    <property type="match status" value="1"/>
</dbReference>
<dbReference type="Pfam" id="PF00215">
    <property type="entry name" value="OMPdecase"/>
    <property type="match status" value="1"/>
</dbReference>
<dbReference type="SMART" id="SM00934">
    <property type="entry name" value="OMPdecase"/>
    <property type="match status" value="1"/>
</dbReference>
<dbReference type="SUPFAM" id="SSF51366">
    <property type="entry name" value="Ribulose-phoshate binding barrel"/>
    <property type="match status" value="1"/>
</dbReference>
<dbReference type="PROSITE" id="PS00156">
    <property type="entry name" value="OMPDECASE"/>
    <property type="match status" value="1"/>
</dbReference>
<sequence>MSSKSQLTYSARASKHPNALVKKLFEVAEAKKTNVTVSADVTTTKELLDLADRLGPYIAVIKTHIDILSDFSEETITGLKALAEKHNFLIFEDRKFIDIGNTVQKQYHGGTLRISEWAHIINCSILPGEGIVEALAQTASAEDFPYGSERGLLILAEMTSKGSLATGQYTTSSVDYARKYKKFVMGFVSTRHLGEVQSEVSSPSEEEDFVVFTTGVNLSSKGDKLGQQYQTPESAVGRGADFIIAGRGIYAAPDPVEAAKQYQKEGWDAYLKRVGAQ</sequence>